<feature type="chain" id="PRO_0000292051" description="GMP reductase">
    <location>
        <begin position="1"/>
        <end position="329"/>
    </location>
</feature>
<feature type="active site" description="Thioimidate intermediate" evidence="1">
    <location>
        <position position="178"/>
    </location>
</feature>
<feature type="binding site" evidence="1">
    <location>
        <begin position="207"/>
        <end position="230"/>
    </location>
    <ligand>
        <name>NADP(+)</name>
        <dbReference type="ChEBI" id="CHEBI:58349"/>
    </ligand>
</feature>
<organism>
    <name type="scientific">Lacticaseibacillus paracasei (strain ATCC 334 / BCRC 17002 / CCUG 31169 / CIP 107868 / KCTC 3260 / NRRL B-441)</name>
    <name type="common">Lactobacillus paracasei</name>
    <dbReference type="NCBI Taxonomy" id="321967"/>
    <lineage>
        <taxon>Bacteria</taxon>
        <taxon>Bacillati</taxon>
        <taxon>Bacillota</taxon>
        <taxon>Bacilli</taxon>
        <taxon>Lactobacillales</taxon>
        <taxon>Lactobacillaceae</taxon>
        <taxon>Lacticaseibacillus</taxon>
    </lineage>
</organism>
<evidence type="ECO:0000255" key="1">
    <source>
        <dbReference type="HAMAP-Rule" id="MF_01511"/>
    </source>
</evidence>
<dbReference type="EC" id="1.7.1.7" evidence="1"/>
<dbReference type="EMBL" id="CP000423">
    <property type="protein sequence ID" value="ABJ69711.1"/>
    <property type="molecule type" value="Genomic_DNA"/>
</dbReference>
<dbReference type="RefSeq" id="YP_806153.1">
    <property type="nucleotide sequence ID" value="NC_008526.1"/>
</dbReference>
<dbReference type="SMR" id="Q03AR1"/>
<dbReference type="STRING" id="321967.LSEI_0911"/>
<dbReference type="PaxDb" id="321967-LSEI_0911"/>
<dbReference type="KEGG" id="lca:LSEI_0911"/>
<dbReference type="PATRIC" id="fig|321967.11.peg.880"/>
<dbReference type="HOGENOM" id="CLU_022552_5_0_9"/>
<dbReference type="Proteomes" id="UP000001651">
    <property type="component" value="Chromosome"/>
</dbReference>
<dbReference type="GO" id="GO:0005829">
    <property type="term" value="C:cytosol"/>
    <property type="evidence" value="ECO:0007669"/>
    <property type="project" value="TreeGrafter"/>
</dbReference>
<dbReference type="GO" id="GO:1902560">
    <property type="term" value="C:GMP reductase complex"/>
    <property type="evidence" value="ECO:0007669"/>
    <property type="project" value="InterPro"/>
</dbReference>
<dbReference type="GO" id="GO:0003920">
    <property type="term" value="F:GMP reductase activity"/>
    <property type="evidence" value="ECO:0007669"/>
    <property type="project" value="UniProtKB-UniRule"/>
</dbReference>
<dbReference type="GO" id="GO:0006163">
    <property type="term" value="P:purine nucleotide metabolic process"/>
    <property type="evidence" value="ECO:0007669"/>
    <property type="project" value="UniProtKB-UniRule"/>
</dbReference>
<dbReference type="CDD" id="cd00381">
    <property type="entry name" value="IMPDH"/>
    <property type="match status" value="1"/>
</dbReference>
<dbReference type="FunFam" id="3.20.20.70:FF:000424">
    <property type="entry name" value="Inosine-5'-monophosphate dehydrogenase 2"/>
    <property type="match status" value="1"/>
</dbReference>
<dbReference type="Gene3D" id="3.20.20.70">
    <property type="entry name" value="Aldolase class I"/>
    <property type="match status" value="1"/>
</dbReference>
<dbReference type="HAMAP" id="MF_01511">
    <property type="entry name" value="GMP_reduct_type2"/>
    <property type="match status" value="1"/>
</dbReference>
<dbReference type="InterPro" id="IPR013785">
    <property type="entry name" value="Aldolase_TIM"/>
</dbReference>
<dbReference type="InterPro" id="IPR050139">
    <property type="entry name" value="GMP_reductase"/>
</dbReference>
<dbReference type="InterPro" id="IPR005994">
    <property type="entry name" value="GuaC_type_2"/>
</dbReference>
<dbReference type="InterPro" id="IPR015875">
    <property type="entry name" value="IMP_DH/GMP_Rdtase_CS"/>
</dbReference>
<dbReference type="InterPro" id="IPR001093">
    <property type="entry name" value="IMP_DH_GMPRt"/>
</dbReference>
<dbReference type="NCBIfam" id="TIGR01306">
    <property type="entry name" value="GMP_reduct_2"/>
    <property type="match status" value="1"/>
</dbReference>
<dbReference type="NCBIfam" id="NF003966">
    <property type="entry name" value="PRK05458.1"/>
    <property type="match status" value="1"/>
</dbReference>
<dbReference type="PANTHER" id="PTHR43170">
    <property type="entry name" value="GMP REDUCTASE"/>
    <property type="match status" value="1"/>
</dbReference>
<dbReference type="PANTHER" id="PTHR43170:SF5">
    <property type="entry name" value="GMP REDUCTASE"/>
    <property type="match status" value="1"/>
</dbReference>
<dbReference type="Pfam" id="PF00478">
    <property type="entry name" value="IMPDH"/>
    <property type="match status" value="1"/>
</dbReference>
<dbReference type="PIRSF" id="PIRSF036500">
    <property type="entry name" value="GMP_red_Firmic"/>
    <property type="match status" value="1"/>
</dbReference>
<dbReference type="SMART" id="SM01240">
    <property type="entry name" value="IMPDH"/>
    <property type="match status" value="1"/>
</dbReference>
<dbReference type="SUPFAM" id="SSF51412">
    <property type="entry name" value="Inosine monophosphate dehydrogenase (IMPDH)"/>
    <property type="match status" value="1"/>
</dbReference>
<dbReference type="PROSITE" id="PS00487">
    <property type="entry name" value="IMP_DH_GMP_RED"/>
    <property type="match status" value="1"/>
</dbReference>
<proteinExistence type="inferred from homology"/>
<gene>
    <name evidence="1" type="primary">guaC</name>
    <name type="ordered locus">LSEI_0911</name>
</gene>
<protein>
    <recommendedName>
        <fullName evidence="1">GMP reductase</fullName>
        <ecNumber evidence="1">1.7.1.7</ecNumber>
    </recommendedName>
    <alternativeName>
        <fullName evidence="1">Guanosine 5'-monophosphate oxidoreductase</fullName>
        <shortName evidence="1">Guanosine monophosphate reductase</shortName>
    </alternativeName>
</protein>
<sequence>MNNGMQIFDYEDIQMIPNKCVVQSRKEVDTSVKFGPHTFKIPVVPANMQTIIDEPLAIWLAEHDYFYIMHRFQPERRMDFVRDMKKRGLIASISVGVKDDEFDFIEALAANELTPDYITIDIAHGYAQVVIDMIQHIKHYLPNAFVIAGNVGTPEAVRELENAGADATKVGIGPGKVCITKLKTGFGTGGWQLAAVRWCAKAARKPIIADGGIRNNGDIAKSIRFGATMCMIGSLFAGHEETPGKHVNIDGKEYQEYYGSASEYQKGTHHNVEGKKILLPVKGKIGDTLKEMQEDLQSAVSYAGGRDLESLTKVDYVIVKNSIFNGDQY</sequence>
<reference key="1">
    <citation type="journal article" date="2006" name="Proc. Natl. Acad. Sci. U.S.A.">
        <title>Comparative genomics of the lactic acid bacteria.</title>
        <authorList>
            <person name="Makarova K.S."/>
            <person name="Slesarev A."/>
            <person name="Wolf Y.I."/>
            <person name="Sorokin A."/>
            <person name="Mirkin B."/>
            <person name="Koonin E.V."/>
            <person name="Pavlov A."/>
            <person name="Pavlova N."/>
            <person name="Karamychev V."/>
            <person name="Polouchine N."/>
            <person name="Shakhova V."/>
            <person name="Grigoriev I."/>
            <person name="Lou Y."/>
            <person name="Rohksar D."/>
            <person name="Lucas S."/>
            <person name="Huang K."/>
            <person name="Goodstein D.M."/>
            <person name="Hawkins T."/>
            <person name="Plengvidhya V."/>
            <person name="Welker D."/>
            <person name="Hughes J."/>
            <person name="Goh Y."/>
            <person name="Benson A."/>
            <person name="Baldwin K."/>
            <person name="Lee J.-H."/>
            <person name="Diaz-Muniz I."/>
            <person name="Dosti B."/>
            <person name="Smeianov V."/>
            <person name="Wechter W."/>
            <person name="Barabote R."/>
            <person name="Lorca G."/>
            <person name="Altermann E."/>
            <person name="Barrangou R."/>
            <person name="Ganesan B."/>
            <person name="Xie Y."/>
            <person name="Rawsthorne H."/>
            <person name="Tamir D."/>
            <person name="Parker C."/>
            <person name="Breidt F."/>
            <person name="Broadbent J.R."/>
            <person name="Hutkins R."/>
            <person name="O'Sullivan D."/>
            <person name="Steele J."/>
            <person name="Unlu G."/>
            <person name="Saier M.H. Jr."/>
            <person name="Klaenhammer T."/>
            <person name="Richardson P."/>
            <person name="Kozyavkin S."/>
            <person name="Weimer B.C."/>
            <person name="Mills D.A."/>
        </authorList>
    </citation>
    <scope>NUCLEOTIDE SEQUENCE [LARGE SCALE GENOMIC DNA]</scope>
    <source>
        <strain>ATCC 334 / BCRC 17002 / CCUG 31169 / CIP 107868 / KCTC 3260 / NRRL B-441</strain>
    </source>
</reference>
<name>GUAC_LACP3</name>
<keyword id="KW-0521">NADP</keyword>
<keyword id="KW-0560">Oxidoreductase</keyword>
<keyword id="KW-1185">Reference proteome</keyword>
<accession>Q03AR1</accession>
<comment type="function">
    <text evidence="1">Catalyzes the irreversible NADPH-dependent deamination of GMP to IMP. It functions in the conversion of nucleobase, nucleoside and nucleotide derivatives of G to A nucleotides, and in maintaining the intracellular balance of A and G nucleotides.</text>
</comment>
<comment type="catalytic activity">
    <reaction evidence="1">
        <text>IMP + NH4(+) + NADP(+) = GMP + NADPH + 2 H(+)</text>
        <dbReference type="Rhea" id="RHEA:17185"/>
        <dbReference type="ChEBI" id="CHEBI:15378"/>
        <dbReference type="ChEBI" id="CHEBI:28938"/>
        <dbReference type="ChEBI" id="CHEBI:57783"/>
        <dbReference type="ChEBI" id="CHEBI:58053"/>
        <dbReference type="ChEBI" id="CHEBI:58115"/>
        <dbReference type="ChEBI" id="CHEBI:58349"/>
        <dbReference type="EC" id="1.7.1.7"/>
    </reaction>
</comment>
<comment type="similarity">
    <text evidence="1">Belongs to the IMPDH/GMPR family. GuaC type 2 subfamily.</text>
</comment>